<protein>
    <recommendedName>
        <fullName>Mediator of RNA polymerase II transcription subunit 5</fullName>
    </recommendedName>
    <alternativeName>
        <fullName>Mediator complex subunit 5</fullName>
    </alternativeName>
</protein>
<feature type="chain" id="PRO_0000302772" description="Mediator of RNA polymerase II transcription subunit 5">
    <location>
        <begin position="1"/>
        <end position="1052"/>
    </location>
</feature>
<feature type="region of interest" description="Disordered" evidence="2">
    <location>
        <begin position="949"/>
        <end position="982"/>
    </location>
</feature>
<feature type="compositionally biased region" description="Low complexity" evidence="2">
    <location>
        <begin position="959"/>
        <end position="970"/>
    </location>
</feature>
<keyword id="KW-0010">Activator</keyword>
<keyword id="KW-0539">Nucleus</keyword>
<keyword id="KW-1185">Reference proteome</keyword>
<keyword id="KW-0804">Transcription</keyword>
<keyword id="KW-0805">Transcription regulation</keyword>
<proteinExistence type="inferred from homology"/>
<evidence type="ECO:0000250" key="1"/>
<evidence type="ECO:0000256" key="2">
    <source>
        <dbReference type="SAM" id="MobiDB-lite"/>
    </source>
</evidence>
<evidence type="ECO:0000305" key="3"/>
<name>MED5_COCIM</name>
<organism>
    <name type="scientific">Coccidioides immitis (strain RS)</name>
    <name type="common">Valley fever fungus</name>
    <dbReference type="NCBI Taxonomy" id="246410"/>
    <lineage>
        <taxon>Eukaryota</taxon>
        <taxon>Fungi</taxon>
        <taxon>Dikarya</taxon>
        <taxon>Ascomycota</taxon>
        <taxon>Pezizomycotina</taxon>
        <taxon>Eurotiomycetes</taxon>
        <taxon>Eurotiomycetidae</taxon>
        <taxon>Onygenales</taxon>
        <taxon>Onygenaceae</taxon>
        <taxon>Coccidioides</taxon>
    </lineage>
</organism>
<reference key="1">
    <citation type="journal article" date="2009" name="Genome Res.">
        <title>Comparative genomic analyses of the human fungal pathogens Coccidioides and their relatives.</title>
        <authorList>
            <person name="Sharpton T.J."/>
            <person name="Stajich J.E."/>
            <person name="Rounsley S.D."/>
            <person name="Gardner M.J."/>
            <person name="Wortman J.R."/>
            <person name="Jordar V.S."/>
            <person name="Maiti R."/>
            <person name="Kodira C.D."/>
            <person name="Neafsey D.E."/>
            <person name="Zeng Q."/>
            <person name="Hung C.-Y."/>
            <person name="McMahan C."/>
            <person name="Muszewska A."/>
            <person name="Grynberg M."/>
            <person name="Mandel M.A."/>
            <person name="Kellner E.M."/>
            <person name="Barker B.M."/>
            <person name="Galgiani J.N."/>
            <person name="Orbach M.J."/>
            <person name="Kirkland T.N."/>
            <person name="Cole G.T."/>
            <person name="Henn M.R."/>
            <person name="Birren B.W."/>
            <person name="Taylor J.W."/>
        </authorList>
    </citation>
    <scope>NUCLEOTIDE SEQUENCE [LARGE SCALE GENOMIC DNA]</scope>
    <source>
        <strain>RS</strain>
    </source>
</reference>
<reference key="2">
    <citation type="journal article" date="2010" name="Genome Res.">
        <title>Population genomic sequencing of Coccidioides fungi reveals recent hybridization and transposon control.</title>
        <authorList>
            <person name="Neafsey D.E."/>
            <person name="Barker B.M."/>
            <person name="Sharpton T.J."/>
            <person name="Stajich J.E."/>
            <person name="Park D.J."/>
            <person name="Whiston E."/>
            <person name="Hung C.-Y."/>
            <person name="McMahan C."/>
            <person name="White J."/>
            <person name="Sykes S."/>
            <person name="Heiman D."/>
            <person name="Young S."/>
            <person name="Zeng Q."/>
            <person name="Abouelleil A."/>
            <person name="Aftuck L."/>
            <person name="Bessette D."/>
            <person name="Brown A."/>
            <person name="FitzGerald M."/>
            <person name="Lui A."/>
            <person name="Macdonald J.P."/>
            <person name="Priest M."/>
            <person name="Orbach M.J."/>
            <person name="Galgiani J.N."/>
            <person name="Kirkland T.N."/>
            <person name="Cole G.T."/>
            <person name="Birren B.W."/>
            <person name="Henn M.R."/>
            <person name="Taylor J.W."/>
            <person name="Rounsley S.D."/>
        </authorList>
    </citation>
    <scope>GENOME REANNOTATION</scope>
    <source>
        <strain>RS</strain>
    </source>
</reference>
<gene>
    <name type="primary">NUT1</name>
    <name type="synonym">MED5</name>
    <name type="ORF">CIMG_04089</name>
</gene>
<accession>Q1E024</accession>
<accession>J3KD71</accession>
<comment type="function">
    <text evidence="1">Component of the Mediator complex, a coactivator involved in the regulated transcription of nearly all RNA polymerase II-dependent genes. Mediator functions as a bridge to convey information from gene-specific regulatory proteins to the basal RNA polymerase II transcription machinery. Mediator is recruited to promoters by direct interactions with regulatory proteins and serves as a scaffold for the assembly of a functional preinitiation complex with RNA polymerase II and the general transcription factors (By similarity).</text>
</comment>
<comment type="subunit">
    <text evidence="1">Component of the Mediator complex.</text>
</comment>
<comment type="subcellular location">
    <subcellularLocation>
        <location evidence="1">Nucleus</location>
    </subcellularLocation>
</comment>
<comment type="similarity">
    <text evidence="3">Belongs to the Mediator complex subunit 5 family.</text>
</comment>
<sequence length="1052" mass="115052">MAYLTDDKASGPEWALLLEQCISHRIISTEFRDFSVIMMRRHPISEKALIRIVLEARSATGLMWDPLIPLYVEVLQKLGYVSLPEILKTLLLFSTIYDDSHPVSKAGPNGKGVKRKKKTSTLMTDNKIIQNVMATITMGQGPKATRGATDVLCAVADWISTLLAWSPSGEGPESDQPGDILGHQDGACIFGSLGLLLVALVGTEKGVSALSSLSKKDRKCLGQALSSYTPICASYSLPLRNRLDSIQKDFNIYPSDSSKGLEESMMGDVNVAVLQFESNVVDIPTTSSRAGLYIYINALLAGRPLIDDSMFLNYLNNRYGGDHISMVEELITAAFDVLSNGMYRNESSKTMFLFRAFLVNKLPPFLAYMSASSMSQIPMEVCITRALSRVDPNTFPSFSETFSMQGNSVLSDVRQEFLFSCALHKLIPESSIERLLGENPMQTLPVGGQFMKDTLIAQINNNPERAEQLLNGIESMEGNAGAIVDAIIEVMHNLCSRKETMTLKSICNSLSRRPQTLDIILLFKSPSFILQPLCSLLDAWKWDEDQGESQLVYDEFGSILLLVLAFKYKYDLTPLDLGINKPDSFILRLLDTGASSQQLKDLTEKQNQNLGAWITALFVAEGISDESMSSCSPQEFYLLVATLFSQSLTACEAGKMEFETLKGGFEYLLEPFLLPALVMALTWLGNHIWESESDLETSLKILHGLVKPASISGEAQEIHRTVLCIASRTLEATLKDTRARHPSRTDISPILDVLEQYHSFRRTGATNQTELDSWRANPAGGGLVTSIRNTFSSLVLWSTDPEISMTPPSYTHRQMLAGIGHVGSERVLQGLIDELKLQTETGSGNLAFDIAATLICAPMAESFTLEQILYRQMDQDKYPLPGCRMLTLRDALGIQRESLSKLIEADPHRAELIIRLHRRVEALCSIPQIAPGDVDVGNIMDSIHLEAVGGDDEQREQHQQQQPDADQSNQGVVAPTGNTPGNLDAMLDAAASAVVADPNGTAGAEAAAGAGLLGNGVGGDAGVGIGTGMNDVFSLMDMGNPEFIDLDMEDML</sequence>
<dbReference type="EMBL" id="GG704916">
    <property type="protein sequence ID" value="EAS33065.3"/>
    <property type="molecule type" value="Genomic_DNA"/>
</dbReference>
<dbReference type="RefSeq" id="XP_001244648.2">
    <property type="nucleotide sequence ID" value="XM_001244647.2"/>
</dbReference>
<dbReference type="SMR" id="Q1E024"/>
<dbReference type="STRING" id="246410.Q1E024"/>
<dbReference type="GeneID" id="4562523"/>
<dbReference type="KEGG" id="cim:CIMG_04089"/>
<dbReference type="VEuPathDB" id="FungiDB:CIMG_04089"/>
<dbReference type="InParanoid" id="Q1E024"/>
<dbReference type="OMA" id="LYVYINA"/>
<dbReference type="OrthoDB" id="5322661at2759"/>
<dbReference type="Proteomes" id="UP000001261">
    <property type="component" value="Unassembled WGS sequence"/>
</dbReference>
<dbReference type="GO" id="GO:0016592">
    <property type="term" value="C:mediator complex"/>
    <property type="evidence" value="ECO:0007669"/>
    <property type="project" value="InterPro"/>
</dbReference>
<dbReference type="GO" id="GO:0003712">
    <property type="term" value="F:transcription coregulator activity"/>
    <property type="evidence" value="ECO:0007669"/>
    <property type="project" value="InterPro"/>
</dbReference>
<dbReference type="GO" id="GO:0006357">
    <property type="term" value="P:regulation of transcription by RNA polymerase II"/>
    <property type="evidence" value="ECO:0007669"/>
    <property type="project" value="InterPro"/>
</dbReference>
<dbReference type="InterPro" id="IPR014801">
    <property type="entry name" value="Mediator_Med5_fun"/>
</dbReference>
<dbReference type="PANTHER" id="PTHR35784">
    <property type="entry name" value="MEDIATOR OF RNA POLYMERASE II TRANSCRIPTION SUBUNIT 5"/>
    <property type="match status" value="1"/>
</dbReference>
<dbReference type="PANTHER" id="PTHR35784:SF1">
    <property type="entry name" value="MEDIATOR OF RNA POLYMERASE II TRANSCRIPTION SUBUNIT 5"/>
    <property type="match status" value="1"/>
</dbReference>
<dbReference type="Pfam" id="PF08689">
    <property type="entry name" value="Med5"/>
    <property type="match status" value="1"/>
</dbReference>